<feature type="chain" id="PRO_0000186268" description="Mitogen-activated protein kinase 8">
    <location>
        <begin position="1"/>
        <end position="426"/>
    </location>
</feature>
<feature type="domain" description="Protein kinase" evidence="5">
    <location>
        <begin position="26"/>
        <end position="321"/>
    </location>
</feature>
<feature type="region of interest" description="Disordered" evidence="7">
    <location>
        <begin position="375"/>
        <end position="426"/>
    </location>
</feature>
<feature type="short sequence motif" description="TXY">
    <location>
        <begin position="183"/>
        <end position="185"/>
    </location>
</feature>
<feature type="compositionally biased region" description="Low complexity" evidence="7">
    <location>
        <begin position="384"/>
        <end position="404"/>
    </location>
</feature>
<feature type="compositionally biased region" description="Polar residues" evidence="7">
    <location>
        <begin position="405"/>
        <end position="420"/>
    </location>
</feature>
<feature type="active site" description="Proton acceptor" evidence="5 6">
    <location>
        <position position="151"/>
    </location>
</feature>
<feature type="binding site" evidence="5">
    <location>
        <begin position="33"/>
        <end position="38"/>
    </location>
    <ligand>
        <name>ATP</name>
        <dbReference type="ChEBI" id="CHEBI:30616"/>
    </ligand>
</feature>
<feature type="binding site" evidence="5">
    <location>
        <position position="55"/>
    </location>
    <ligand>
        <name>ATP</name>
        <dbReference type="ChEBI" id="CHEBI:30616"/>
    </ligand>
</feature>
<feature type="modified residue" description="Phosphothreonine" evidence="1">
    <location>
        <position position="183"/>
    </location>
</feature>
<feature type="modified residue" description="Phosphotyrosine" evidence="1">
    <location>
        <position position="185"/>
    </location>
</feature>
<feature type="splice variant" id="VSP_007348" description="In isoform 1." evidence="9">
    <original>GAAVT</original>
    <variation>AQVQQ</variation>
    <location>
        <begin position="380"/>
        <end position="384"/>
    </location>
</feature>
<feature type="splice variant" id="VSP_007349" description="In isoform 1." evidence="9">
    <location>
        <begin position="385"/>
        <end position="426"/>
    </location>
</feature>
<name>MK08_XENLA</name>
<dbReference type="EC" id="2.7.11.24"/>
<dbReference type="EMBL" id="AB073999">
    <property type="protein sequence ID" value="BAB85483.1"/>
    <property type="molecule type" value="mRNA"/>
</dbReference>
<dbReference type="EMBL" id="AB074000">
    <property type="protein sequence ID" value="BAB91438.1"/>
    <property type="molecule type" value="mRNA"/>
</dbReference>
<dbReference type="EMBL" id="BC046834">
    <property type="protein sequence ID" value="AAH46834.1"/>
    <property type="molecule type" value="mRNA"/>
</dbReference>
<dbReference type="RefSeq" id="NP_001080184.1">
    <molecule id="Q8QHK8-1"/>
    <property type="nucleotide sequence ID" value="NM_001086715.1"/>
</dbReference>
<dbReference type="SMR" id="Q8QHK8"/>
<dbReference type="BioGRID" id="98118">
    <property type="interactions" value="1"/>
</dbReference>
<dbReference type="IntAct" id="Q8QHK8">
    <property type="interactions" value="1"/>
</dbReference>
<dbReference type="MINT" id="Q8QHK8"/>
<dbReference type="DNASU" id="379876"/>
<dbReference type="GeneID" id="379876"/>
<dbReference type="KEGG" id="xla:379876"/>
<dbReference type="AGR" id="Xenbase:XB-GENE-1217560"/>
<dbReference type="CTD" id="379876"/>
<dbReference type="Xenbase" id="XB-GENE-1217560">
    <property type="gene designation" value="mapk8.L"/>
</dbReference>
<dbReference type="OMA" id="AMDMWAV"/>
<dbReference type="OrthoDB" id="192887at2759"/>
<dbReference type="BRENDA" id="2.7.11.24">
    <property type="organism ID" value="6725"/>
</dbReference>
<dbReference type="Proteomes" id="UP000186698">
    <property type="component" value="Chromosome 7L"/>
</dbReference>
<dbReference type="Bgee" id="379876">
    <property type="expression patterns" value="Expressed in muscle tissue and 19 other cell types or tissues"/>
</dbReference>
<dbReference type="GO" id="GO:0005737">
    <property type="term" value="C:cytoplasm"/>
    <property type="evidence" value="ECO:0000318"/>
    <property type="project" value="GO_Central"/>
</dbReference>
<dbReference type="GO" id="GO:0005634">
    <property type="term" value="C:nucleus"/>
    <property type="evidence" value="ECO:0000318"/>
    <property type="project" value="GO_Central"/>
</dbReference>
<dbReference type="GO" id="GO:0045202">
    <property type="term" value="C:synapse"/>
    <property type="evidence" value="ECO:0000250"/>
    <property type="project" value="UniProtKB"/>
</dbReference>
<dbReference type="GO" id="GO:0005524">
    <property type="term" value="F:ATP binding"/>
    <property type="evidence" value="ECO:0007669"/>
    <property type="project" value="UniProtKB-KW"/>
</dbReference>
<dbReference type="GO" id="GO:0004705">
    <property type="term" value="F:JUN kinase activity"/>
    <property type="evidence" value="ECO:0000318"/>
    <property type="project" value="GO_Central"/>
</dbReference>
<dbReference type="GO" id="GO:0106310">
    <property type="term" value="F:protein serine kinase activity"/>
    <property type="evidence" value="ECO:0007669"/>
    <property type="project" value="RHEA"/>
</dbReference>
<dbReference type="GO" id="GO:0004674">
    <property type="term" value="F:protein serine/threonine kinase activity"/>
    <property type="evidence" value="ECO:0000250"/>
    <property type="project" value="UniProtKB"/>
</dbReference>
<dbReference type="GO" id="GO:0007254">
    <property type="term" value="P:JNK cascade"/>
    <property type="evidence" value="ECO:0000250"/>
    <property type="project" value="UniProtKB"/>
</dbReference>
<dbReference type="GO" id="GO:0043065">
    <property type="term" value="P:positive regulation of apoptotic process"/>
    <property type="evidence" value="ECO:0000318"/>
    <property type="project" value="GO_Central"/>
</dbReference>
<dbReference type="GO" id="GO:1900227">
    <property type="term" value="P:positive regulation of NLRP3 inflammasome complex assembly"/>
    <property type="evidence" value="ECO:0000250"/>
    <property type="project" value="UniProtKB"/>
</dbReference>
<dbReference type="GO" id="GO:0009612">
    <property type="term" value="P:response to mechanical stimulus"/>
    <property type="evidence" value="ECO:0000318"/>
    <property type="project" value="GO_Central"/>
</dbReference>
<dbReference type="GO" id="GO:0048511">
    <property type="term" value="P:rhythmic process"/>
    <property type="evidence" value="ECO:0007669"/>
    <property type="project" value="UniProtKB-KW"/>
</dbReference>
<dbReference type="CDD" id="cd07850">
    <property type="entry name" value="STKc_JNK"/>
    <property type="match status" value="1"/>
</dbReference>
<dbReference type="FunFam" id="1.10.510.10:FF:000009">
    <property type="entry name" value="Mitogen-activated protein kinase"/>
    <property type="match status" value="1"/>
</dbReference>
<dbReference type="FunFam" id="3.30.200.20:FF:000210">
    <property type="entry name" value="Mitogen-activated protein kinase"/>
    <property type="match status" value="1"/>
</dbReference>
<dbReference type="Gene3D" id="3.30.200.20">
    <property type="entry name" value="Phosphorylase Kinase, domain 1"/>
    <property type="match status" value="1"/>
</dbReference>
<dbReference type="Gene3D" id="1.10.510.10">
    <property type="entry name" value="Transferase(Phosphotransferase) domain 1"/>
    <property type="match status" value="1"/>
</dbReference>
<dbReference type="InterPro" id="IPR011009">
    <property type="entry name" value="Kinase-like_dom_sf"/>
</dbReference>
<dbReference type="InterPro" id="IPR050117">
    <property type="entry name" value="MAP_kinase"/>
</dbReference>
<dbReference type="InterPro" id="IPR003527">
    <property type="entry name" value="MAP_kinase_CS"/>
</dbReference>
<dbReference type="InterPro" id="IPR008351">
    <property type="entry name" value="MAPK_JNK"/>
</dbReference>
<dbReference type="InterPro" id="IPR000719">
    <property type="entry name" value="Prot_kinase_dom"/>
</dbReference>
<dbReference type="InterPro" id="IPR008271">
    <property type="entry name" value="Ser/Thr_kinase_AS"/>
</dbReference>
<dbReference type="PANTHER" id="PTHR24055">
    <property type="entry name" value="MITOGEN-ACTIVATED PROTEIN KINASE"/>
    <property type="match status" value="1"/>
</dbReference>
<dbReference type="Pfam" id="PF00069">
    <property type="entry name" value="Pkinase"/>
    <property type="match status" value="1"/>
</dbReference>
<dbReference type="PRINTS" id="PR01772">
    <property type="entry name" value="JNKMAPKINASE"/>
</dbReference>
<dbReference type="SMART" id="SM00220">
    <property type="entry name" value="S_TKc"/>
    <property type="match status" value="1"/>
</dbReference>
<dbReference type="SUPFAM" id="SSF56112">
    <property type="entry name" value="Protein kinase-like (PK-like)"/>
    <property type="match status" value="1"/>
</dbReference>
<dbReference type="PROSITE" id="PS01351">
    <property type="entry name" value="MAPK"/>
    <property type="match status" value="1"/>
</dbReference>
<dbReference type="PROSITE" id="PS50011">
    <property type="entry name" value="PROTEIN_KINASE_DOM"/>
    <property type="match status" value="1"/>
</dbReference>
<dbReference type="PROSITE" id="PS00108">
    <property type="entry name" value="PROTEIN_KINASE_ST"/>
    <property type="match status" value="1"/>
</dbReference>
<organism evidence="11">
    <name type="scientific">Xenopus laevis</name>
    <name type="common">African clawed frog</name>
    <dbReference type="NCBI Taxonomy" id="8355"/>
    <lineage>
        <taxon>Eukaryota</taxon>
        <taxon>Metazoa</taxon>
        <taxon>Chordata</taxon>
        <taxon>Craniata</taxon>
        <taxon>Vertebrata</taxon>
        <taxon>Euteleostomi</taxon>
        <taxon>Amphibia</taxon>
        <taxon>Batrachia</taxon>
        <taxon>Anura</taxon>
        <taxon>Pipoidea</taxon>
        <taxon>Pipidae</taxon>
        <taxon>Xenopodinae</taxon>
        <taxon>Xenopus</taxon>
        <taxon>Xenopus</taxon>
    </lineage>
</organism>
<comment type="function">
    <text evidence="2 4 8">Responds to activation by environmental stress and pro-inflammatory cytokines by phosphorylating a number of transcription factors, and thus regulating transcriptional activity (By similarity). Regulates morphogenic cell movements, controlling convergent extension during gastrulation. May play a role in the regulation of the circadian clock (By similarity).</text>
</comment>
<comment type="catalytic activity">
    <reaction>
        <text>L-seryl-[protein] + ATP = O-phospho-L-seryl-[protein] + ADP + H(+)</text>
        <dbReference type="Rhea" id="RHEA:17989"/>
        <dbReference type="Rhea" id="RHEA-COMP:9863"/>
        <dbReference type="Rhea" id="RHEA-COMP:11604"/>
        <dbReference type="ChEBI" id="CHEBI:15378"/>
        <dbReference type="ChEBI" id="CHEBI:29999"/>
        <dbReference type="ChEBI" id="CHEBI:30616"/>
        <dbReference type="ChEBI" id="CHEBI:83421"/>
        <dbReference type="ChEBI" id="CHEBI:456216"/>
        <dbReference type="EC" id="2.7.11.24"/>
    </reaction>
</comment>
<comment type="catalytic activity">
    <reaction>
        <text>L-threonyl-[protein] + ATP = O-phospho-L-threonyl-[protein] + ADP + H(+)</text>
        <dbReference type="Rhea" id="RHEA:46608"/>
        <dbReference type="Rhea" id="RHEA-COMP:11060"/>
        <dbReference type="Rhea" id="RHEA-COMP:11605"/>
        <dbReference type="ChEBI" id="CHEBI:15378"/>
        <dbReference type="ChEBI" id="CHEBI:30013"/>
        <dbReference type="ChEBI" id="CHEBI:30616"/>
        <dbReference type="ChEBI" id="CHEBI:61977"/>
        <dbReference type="ChEBI" id="CHEBI:456216"/>
        <dbReference type="EC" id="2.7.11.24"/>
    </reaction>
</comment>
<comment type="cofactor">
    <cofactor evidence="8">
        <name>Mg(2+)</name>
        <dbReference type="ChEBI" id="CHEBI:18420"/>
    </cofactor>
</comment>
<comment type="activity regulation">
    <text evidence="2 8">Activated by threonine and tyrosine phosphorylation, potentially by the dual-specificity kinase, MKK7. Indirectly activated by Wnt5a.</text>
</comment>
<comment type="subcellular location">
    <subcellularLocation>
        <location evidence="3">Cytoplasm</location>
    </subcellularLocation>
    <subcellularLocation>
        <location evidence="4">Nucleus</location>
    </subcellularLocation>
    <subcellularLocation>
        <location evidence="3">Synapse</location>
    </subcellularLocation>
</comment>
<comment type="alternative products">
    <event type="alternative splicing"/>
    <isoform>
        <id>Q8QHK8-1</id>
        <name>2</name>
        <name>Beta</name>
        <sequence type="displayed"/>
    </isoform>
    <isoform>
        <id>Q8QHK8-2</id>
        <name>1</name>
        <name>Alpha</name>
        <sequence type="described" ref="VSP_007348 VSP_007349"/>
    </isoform>
</comment>
<comment type="tissue specificity">
    <text evidence="8">Strongly expressed in presumptive ectoderm and mesoderm regions and weakly expressed in endoderm regions during early stages of embryo development. Expressed in the head and dorsal regions during neurula and tailbud stages.</text>
</comment>
<comment type="domain">
    <text>The TXY motif contains the threonine and tyrosine residues whose phosphorylation activates the MAP kinases.</text>
</comment>
<comment type="PTM">
    <text evidence="1">Dually phosphorylated on Thr-183 and Tyr-185, which activates the enzyme.</text>
</comment>
<comment type="similarity">
    <text evidence="10">Belongs to the protein kinase superfamily. CMGC Ser/Thr protein kinase family. MAP kinase subfamily.</text>
</comment>
<protein>
    <recommendedName>
        <fullName>Mitogen-activated protein kinase 8</fullName>
        <shortName>MAP kinase 8</shortName>
        <shortName>MAPK 8</shortName>
        <ecNumber>2.7.11.24</ecNumber>
    </recommendedName>
    <alternativeName>
        <fullName>Stress-activated protein kinase JNK1</fullName>
    </alternativeName>
</protein>
<gene>
    <name type="primary">mapk8</name>
    <name type="synonym">jnk1</name>
</gene>
<sequence>MSRSKRDSNFSVFEIGDSTFTVLKRYQNLKPIGSGAQGIVCAAFDAVLERHVAIKKLSRPFQNQTHAKRAYRELVLMKCVNHKNIIGLLNVFTPQKSLEEFQDLYIVMELMDANLCQVIQMELDHERMSYLLYQMLCGIKHLHSAGIIHRDLKPSNIVVKSDCTLKILDFGLARTAGTSFMMTPYVVTRYYRAPEVILGMGYKENVDIWSVGCILGEMIKGGVLFPGTDHIDQWNKVIEQLGTPCTEFMKKLQPTVRTYVENRPKYAGYSFEKLFPDVLFPADSEHNKLKASQARDLLSKMLVIDASKRISVDDALQHPYINVWYDPLEAEAPPPKIPDKQLDEREHTIEEWKELIYKEVLDWEERAKNGVIRGQPAPLGAAVTDGSQAHTSSSSGDASSMSTDPTLPSDTDSSLETSAGTLGCCR</sequence>
<accession>Q8QHK8</accession>
<accession>Q8JJC3</accession>
<evidence type="ECO:0000250" key="1"/>
<evidence type="ECO:0000250" key="2">
    <source>
        <dbReference type="UniProtKB" id="P45983"/>
    </source>
</evidence>
<evidence type="ECO:0000250" key="3">
    <source>
        <dbReference type="UniProtKB" id="P49185"/>
    </source>
</evidence>
<evidence type="ECO:0000250" key="4">
    <source>
        <dbReference type="UniProtKB" id="Q91Y86"/>
    </source>
</evidence>
<evidence type="ECO:0000255" key="5">
    <source>
        <dbReference type="PROSITE-ProRule" id="PRU00159"/>
    </source>
</evidence>
<evidence type="ECO:0000255" key="6">
    <source>
        <dbReference type="PROSITE-ProRule" id="PRU10027"/>
    </source>
</evidence>
<evidence type="ECO:0000256" key="7">
    <source>
        <dbReference type="SAM" id="MobiDB-lite"/>
    </source>
</evidence>
<evidence type="ECO:0000269" key="8">
    <source>
    </source>
</evidence>
<evidence type="ECO:0000303" key="9">
    <source>
    </source>
</evidence>
<evidence type="ECO:0000305" key="10"/>
<evidence type="ECO:0000312" key="11">
    <source>
        <dbReference type="EMBL" id="BAB85483.1"/>
    </source>
</evidence>
<proteinExistence type="evidence at transcript level"/>
<reference evidence="10" key="1">
    <citation type="journal article" date="2002" name="EMBO Rep.">
        <title>JNK functions in the non-canonical Wnt pathway to regulate convergent extension movements in vertebrates.</title>
        <authorList>
            <person name="Yamanaka H."/>
            <person name="Moriguchi T."/>
            <person name="Masuyama N."/>
            <person name="Kusakabe M."/>
            <person name="Hanafusa H."/>
            <person name="Takada R."/>
            <person name="Takada S."/>
            <person name="Nishida E."/>
        </authorList>
    </citation>
    <scope>NUCLEOTIDE SEQUENCE [MRNA] (ISOFORMS 1 AND 2)</scope>
    <scope>FUNCTION</scope>
    <scope>COFACTOR</scope>
    <scope>TISSUE SPECIFICITY</scope>
    <scope>ACTIVITY REGULATION</scope>
    <source>
        <tissue>Oocyte</tissue>
    </source>
</reference>
<reference key="2">
    <citation type="submission" date="2003-02" db="EMBL/GenBank/DDBJ databases">
        <authorList>
            <consortium name="NIH - Xenopus Gene Collection (XGC) project"/>
        </authorList>
    </citation>
    <scope>NUCLEOTIDE SEQUENCE [LARGE SCALE MRNA]</scope>
    <source>
        <tissue>Embryo</tissue>
    </source>
</reference>
<keyword id="KW-0025">Alternative splicing</keyword>
<keyword id="KW-0067">ATP-binding</keyword>
<keyword id="KW-0090">Biological rhythms</keyword>
<keyword id="KW-0963">Cytoplasm</keyword>
<keyword id="KW-0217">Developmental protein</keyword>
<keyword id="KW-0418">Kinase</keyword>
<keyword id="KW-0547">Nucleotide-binding</keyword>
<keyword id="KW-0539">Nucleus</keyword>
<keyword id="KW-0597">Phosphoprotein</keyword>
<keyword id="KW-1185">Reference proteome</keyword>
<keyword id="KW-0723">Serine/threonine-protein kinase</keyword>
<keyword id="KW-0770">Synapse</keyword>
<keyword id="KW-0808">Transferase</keyword>